<sequence>MGSAESKAQVTPSRPLRNHLLSRVNDPRSPTSGIPRTPIEVGESPRNTPQTVKEEEEEIPDSPEIFDPRSPTNGITRTPLRPPIHAVLNNLAKQLSEVFVAEDSSTEGGPLGFTGPEATNLERQVVESQTAPPAGEHVNDHEVEPSVEKAETQIDLEVCPGVEKVKSPIAEMLETLNDQEESPIAETLETMNDQEESPIAETMNDQEESPIAETLENLNDQAESPIAETLENLNDQAESPIAEMLDTLNDQEPVAVAQSVVSTESTQATGQQQKTRGKSPRSSGVKNVRQRPRKALLSSSSGRSPLRILQEDNSPNTNTQHRQAKKLSFQSEPALPHRALKISHPNWESSLNKENAEYGHSNS</sequence>
<dbReference type="UniPathway" id="UPA00143"/>
<dbReference type="Proteomes" id="UP000186698">
    <property type="component" value="Unplaced"/>
</dbReference>
<dbReference type="GO" id="GO:0005829">
    <property type="term" value="C:cytosol"/>
    <property type="evidence" value="ECO:0007669"/>
    <property type="project" value="UniProtKB-SubCell"/>
</dbReference>
<dbReference type="GO" id="GO:0051301">
    <property type="term" value="P:cell division"/>
    <property type="evidence" value="ECO:0007669"/>
    <property type="project" value="UniProtKB-KW"/>
</dbReference>
<dbReference type="GO" id="GO:0016567">
    <property type="term" value="P:protein ubiquitination"/>
    <property type="evidence" value="ECO:0007669"/>
    <property type="project" value="UniProtKB-UniPathway"/>
</dbReference>
<dbReference type="InterPro" id="IPR038832">
    <property type="entry name" value="CDCA3"/>
</dbReference>
<dbReference type="PANTHER" id="PTHR34756">
    <property type="entry name" value="CELL DIVISION CYCLE-ASSOCIATED PROTEIN 3"/>
    <property type="match status" value="1"/>
</dbReference>
<dbReference type="PANTHER" id="PTHR34756:SF1">
    <property type="entry name" value="CELL DIVISION CYCLE-ASSOCIATED PROTEIN 3"/>
    <property type="match status" value="1"/>
</dbReference>
<feature type="chain" id="PRO_0000287711" description="Cell division cycle-associated protein 3">
    <location>
        <begin position="1"/>
        <end position="363"/>
    </location>
</feature>
<feature type="region of interest" description="Disordered" evidence="1">
    <location>
        <begin position="1"/>
        <end position="81"/>
    </location>
</feature>
<feature type="region of interest" description="F-box-like">
    <location>
        <begin position="93"/>
        <end position="152"/>
    </location>
</feature>
<feature type="region of interest" description="Disordered" evidence="1">
    <location>
        <begin position="126"/>
        <end position="152"/>
    </location>
</feature>
<feature type="region of interest" description="Disordered" evidence="1">
    <location>
        <begin position="191"/>
        <end position="210"/>
    </location>
</feature>
<feature type="region of interest" description="Disordered" evidence="1">
    <location>
        <begin position="231"/>
        <end position="363"/>
    </location>
</feature>
<feature type="short sequence motif" description="KEN box">
    <location>
        <begin position="353"/>
        <end position="355"/>
    </location>
</feature>
<feature type="compositionally biased region" description="Polar residues" evidence="1">
    <location>
        <begin position="1"/>
        <end position="12"/>
    </location>
</feature>
<feature type="compositionally biased region" description="Basic and acidic residues" evidence="1">
    <location>
        <begin position="137"/>
        <end position="152"/>
    </location>
</feature>
<feature type="compositionally biased region" description="Acidic residues" evidence="1">
    <location>
        <begin position="192"/>
        <end position="210"/>
    </location>
</feature>
<feature type="compositionally biased region" description="Polar residues" evidence="1">
    <location>
        <begin position="259"/>
        <end position="285"/>
    </location>
</feature>
<feature type="compositionally biased region" description="Low complexity" evidence="1">
    <location>
        <begin position="296"/>
        <end position="308"/>
    </location>
</feature>
<feature type="compositionally biased region" description="Polar residues" evidence="1">
    <location>
        <begin position="311"/>
        <end position="321"/>
    </location>
</feature>
<name>CDCA3_XENLA</name>
<comment type="function">
    <text evidence="2">F-box-like protein which is required for entry into mitosis. Acts by participating in E3 ligase complexes that mediate the ubiquitination and degradation of WEE1 kinase at G2/M phase.</text>
</comment>
<comment type="pathway">
    <text>Protein modification; protein ubiquitination.</text>
</comment>
<comment type="subunit">
    <text evidence="2">Interacts with wee1, when wee1 is phosphorylated at 'Ser-38'.</text>
</comment>
<comment type="subcellular location">
    <subcellularLocation>
        <location evidence="2">Cytoplasm</location>
        <location evidence="2">Cytosol</location>
    </subcellularLocation>
</comment>
<comment type="developmental stage">
    <text evidence="2">Present at high level in G2 and M phases but declines rapidly in G2 phase (at protein level).</text>
</comment>
<comment type="domain">
    <text>The KEN box is required for the association with the APC/C-Cdh1 complex.</text>
</comment>
<comment type="PTM">
    <text evidence="2">Phosphorylated.</text>
</comment>
<comment type="PTM">
    <text evidence="2">Ubiquitinated and degraded by the APC/C-Cdh1 complex during G1 phase.</text>
</comment>
<evidence type="ECO:0000256" key="1">
    <source>
        <dbReference type="SAM" id="MobiDB-lite"/>
    </source>
</evidence>
<evidence type="ECO:0000269" key="2">
    <source>
    </source>
</evidence>
<accession>P0C2X8</accession>
<proteinExistence type="evidence at protein level"/>
<keyword id="KW-0131">Cell cycle</keyword>
<keyword id="KW-0132">Cell division</keyword>
<keyword id="KW-0963">Cytoplasm</keyword>
<keyword id="KW-0498">Mitosis</keyword>
<keyword id="KW-0597">Phosphoprotein</keyword>
<keyword id="KW-1185">Reference proteome</keyword>
<keyword id="KW-0832">Ubl conjugation</keyword>
<keyword id="KW-0833">Ubl conjugation pathway</keyword>
<gene>
    <name type="primary">cdca3</name>
    <name type="synonym">tome1</name>
</gene>
<protein>
    <recommendedName>
        <fullName>Cell division cycle-associated protein 3</fullName>
    </recommendedName>
    <alternativeName>
        <fullName>Trigger of mitotic entry protein 1</fullName>
        <shortName>TOME-1</shortName>
    </alternativeName>
</protein>
<reference key="1">
    <citation type="journal article" date="2003" name="Cell">
        <title>Tome-1, a trigger of mitotic entry, is degraded during G1 via the APC.</title>
        <authorList>
            <person name="Ayad N.G."/>
            <person name="Rankin S."/>
            <person name="Murakami M."/>
            <person name="Jebanathirajah J."/>
            <person name="Gygi S.P."/>
            <person name="Kirschner M.W."/>
        </authorList>
    </citation>
    <scope>NUCLEOTIDE SEQUENCE [MRNA]</scope>
    <scope>FUNCTION</scope>
    <scope>SUBCELLULAR LOCATION</scope>
    <scope>PHOSPHORYLATION</scope>
    <scope>UBIQUITINATION</scope>
    <scope>DEVELOPMENTAL STAGE</scope>
    <scope>INTERACTION WITH WEE1</scope>
</reference>
<organism>
    <name type="scientific">Xenopus laevis</name>
    <name type="common">African clawed frog</name>
    <dbReference type="NCBI Taxonomy" id="8355"/>
    <lineage>
        <taxon>Eukaryota</taxon>
        <taxon>Metazoa</taxon>
        <taxon>Chordata</taxon>
        <taxon>Craniata</taxon>
        <taxon>Vertebrata</taxon>
        <taxon>Euteleostomi</taxon>
        <taxon>Amphibia</taxon>
        <taxon>Batrachia</taxon>
        <taxon>Anura</taxon>
        <taxon>Pipoidea</taxon>
        <taxon>Pipidae</taxon>
        <taxon>Xenopodinae</taxon>
        <taxon>Xenopus</taxon>
        <taxon>Xenopus</taxon>
    </lineage>
</organism>